<name>PUR7_CAMHC</name>
<accession>A7I1M0</accession>
<gene>
    <name evidence="1" type="primary">purC</name>
    <name type="ordered locus">CHAB381_0847</name>
</gene>
<organism>
    <name type="scientific">Campylobacter hominis (strain ATCC BAA-381 / DSM 21671 / CCUG 45161 / LMG 19568 / NCTC 13146 / CH001A)</name>
    <dbReference type="NCBI Taxonomy" id="360107"/>
    <lineage>
        <taxon>Bacteria</taxon>
        <taxon>Pseudomonadati</taxon>
        <taxon>Campylobacterota</taxon>
        <taxon>Epsilonproteobacteria</taxon>
        <taxon>Campylobacterales</taxon>
        <taxon>Campylobacteraceae</taxon>
        <taxon>Campylobacter</taxon>
    </lineage>
</organism>
<feature type="chain" id="PRO_1000018681" description="Phosphoribosylaminoimidazole-succinocarboxamide synthase">
    <location>
        <begin position="1"/>
        <end position="239"/>
    </location>
</feature>
<dbReference type="EC" id="6.3.2.6" evidence="1"/>
<dbReference type="EMBL" id="CP000776">
    <property type="protein sequence ID" value="ABS51535.1"/>
    <property type="molecule type" value="Genomic_DNA"/>
</dbReference>
<dbReference type="RefSeq" id="WP_012108700.1">
    <property type="nucleotide sequence ID" value="NC_009714.1"/>
</dbReference>
<dbReference type="SMR" id="A7I1M0"/>
<dbReference type="STRING" id="360107.CHAB381_0847"/>
<dbReference type="KEGG" id="cha:CHAB381_0847"/>
<dbReference type="eggNOG" id="COG0152">
    <property type="taxonomic scope" value="Bacteria"/>
</dbReference>
<dbReference type="HOGENOM" id="CLU_061495_2_0_7"/>
<dbReference type="OrthoDB" id="9801549at2"/>
<dbReference type="UniPathway" id="UPA00074">
    <property type="reaction ID" value="UER00131"/>
</dbReference>
<dbReference type="Proteomes" id="UP000002407">
    <property type="component" value="Chromosome"/>
</dbReference>
<dbReference type="GO" id="GO:0005524">
    <property type="term" value="F:ATP binding"/>
    <property type="evidence" value="ECO:0007669"/>
    <property type="project" value="UniProtKB-KW"/>
</dbReference>
<dbReference type="GO" id="GO:0004639">
    <property type="term" value="F:phosphoribosylaminoimidazolesuccinocarboxamide synthase activity"/>
    <property type="evidence" value="ECO:0007669"/>
    <property type="project" value="UniProtKB-UniRule"/>
</dbReference>
<dbReference type="GO" id="GO:0006189">
    <property type="term" value="P:'de novo' IMP biosynthetic process"/>
    <property type="evidence" value="ECO:0007669"/>
    <property type="project" value="UniProtKB-UniRule"/>
</dbReference>
<dbReference type="GO" id="GO:0009236">
    <property type="term" value="P:cobalamin biosynthetic process"/>
    <property type="evidence" value="ECO:0007669"/>
    <property type="project" value="InterPro"/>
</dbReference>
<dbReference type="CDD" id="cd01415">
    <property type="entry name" value="SAICAR_synt_PurC"/>
    <property type="match status" value="1"/>
</dbReference>
<dbReference type="FunFam" id="3.30.470.20:FF:000006">
    <property type="entry name" value="Phosphoribosylaminoimidazole-succinocarboxamide synthase"/>
    <property type="match status" value="1"/>
</dbReference>
<dbReference type="Gene3D" id="3.30.470.20">
    <property type="entry name" value="ATP-grasp fold, B domain"/>
    <property type="match status" value="1"/>
</dbReference>
<dbReference type="Gene3D" id="3.30.200.20">
    <property type="entry name" value="Phosphorylase Kinase, domain 1"/>
    <property type="match status" value="1"/>
</dbReference>
<dbReference type="HAMAP" id="MF_00137">
    <property type="entry name" value="SAICAR_synth"/>
    <property type="match status" value="1"/>
</dbReference>
<dbReference type="InterPro" id="IPR028923">
    <property type="entry name" value="SAICAR_synt/ADE2_N"/>
</dbReference>
<dbReference type="InterPro" id="IPR033934">
    <property type="entry name" value="SAICAR_synt_PurC"/>
</dbReference>
<dbReference type="InterPro" id="IPR001636">
    <property type="entry name" value="SAICAR_synth"/>
</dbReference>
<dbReference type="InterPro" id="IPR050089">
    <property type="entry name" value="SAICAR_synthetase"/>
</dbReference>
<dbReference type="InterPro" id="IPR018236">
    <property type="entry name" value="SAICAR_synthetase_CS"/>
</dbReference>
<dbReference type="NCBIfam" id="TIGR00081">
    <property type="entry name" value="purC"/>
    <property type="match status" value="1"/>
</dbReference>
<dbReference type="PANTHER" id="PTHR43599">
    <property type="entry name" value="MULTIFUNCTIONAL PROTEIN ADE2"/>
    <property type="match status" value="1"/>
</dbReference>
<dbReference type="PANTHER" id="PTHR43599:SF3">
    <property type="entry name" value="SI:DKEY-6E2.2"/>
    <property type="match status" value="1"/>
</dbReference>
<dbReference type="Pfam" id="PF01259">
    <property type="entry name" value="SAICAR_synt"/>
    <property type="match status" value="1"/>
</dbReference>
<dbReference type="SUPFAM" id="SSF56104">
    <property type="entry name" value="SAICAR synthase-like"/>
    <property type="match status" value="1"/>
</dbReference>
<dbReference type="PROSITE" id="PS01057">
    <property type="entry name" value="SAICAR_SYNTHETASE_1"/>
    <property type="match status" value="1"/>
</dbReference>
<sequence>MKVTKKDMIYEGKGKKMWSVAEDENLLIAEFKDDLTAFNGIKKSSEKGKGALNNKISTQLFHLLEKNGIKTDLVETINDTEQVVKKVKIFPLEVIARNIATGSLTKRLGIKDGTVLPFTLVEFCYKDDDLGDPILNDDHALLLGAVKDKNELENLRQTAIKINKILKEFFATKNLKLVDFKIELGKDKDGNILLADEISPDSCRFWDAKTNEKLDKDRFRQSIGNVKVAYEEVLRRILS</sequence>
<keyword id="KW-0067">ATP-binding</keyword>
<keyword id="KW-0436">Ligase</keyword>
<keyword id="KW-0547">Nucleotide-binding</keyword>
<keyword id="KW-0658">Purine biosynthesis</keyword>
<keyword id="KW-1185">Reference proteome</keyword>
<comment type="catalytic activity">
    <reaction evidence="1">
        <text>5-amino-1-(5-phospho-D-ribosyl)imidazole-4-carboxylate + L-aspartate + ATP = (2S)-2-[5-amino-1-(5-phospho-beta-D-ribosyl)imidazole-4-carboxamido]succinate + ADP + phosphate + 2 H(+)</text>
        <dbReference type="Rhea" id="RHEA:22628"/>
        <dbReference type="ChEBI" id="CHEBI:15378"/>
        <dbReference type="ChEBI" id="CHEBI:29991"/>
        <dbReference type="ChEBI" id="CHEBI:30616"/>
        <dbReference type="ChEBI" id="CHEBI:43474"/>
        <dbReference type="ChEBI" id="CHEBI:58443"/>
        <dbReference type="ChEBI" id="CHEBI:77657"/>
        <dbReference type="ChEBI" id="CHEBI:456216"/>
        <dbReference type="EC" id="6.3.2.6"/>
    </reaction>
</comment>
<comment type="pathway">
    <text evidence="1">Purine metabolism; IMP biosynthesis via de novo pathway; 5-amino-1-(5-phospho-D-ribosyl)imidazole-4-carboxamide from 5-amino-1-(5-phospho-D-ribosyl)imidazole-4-carboxylate: step 1/2.</text>
</comment>
<comment type="similarity">
    <text evidence="1">Belongs to the SAICAR synthetase family.</text>
</comment>
<protein>
    <recommendedName>
        <fullName evidence="1">Phosphoribosylaminoimidazole-succinocarboxamide synthase</fullName>
        <ecNumber evidence="1">6.3.2.6</ecNumber>
    </recommendedName>
    <alternativeName>
        <fullName evidence="1">SAICAR synthetase</fullName>
    </alternativeName>
</protein>
<evidence type="ECO:0000255" key="1">
    <source>
        <dbReference type="HAMAP-Rule" id="MF_00137"/>
    </source>
</evidence>
<proteinExistence type="inferred from homology"/>
<reference key="1">
    <citation type="submission" date="2007-07" db="EMBL/GenBank/DDBJ databases">
        <title>Complete genome sequence of Campylobacter hominis ATCC BAA-381, a commensal isolated from the human gastrointestinal tract.</title>
        <authorList>
            <person name="Fouts D.E."/>
            <person name="Mongodin E.F."/>
            <person name="Puiu D."/>
            <person name="Sebastian Y."/>
            <person name="Miller W.G."/>
            <person name="Mandrell R.E."/>
            <person name="Nelson K.E."/>
        </authorList>
    </citation>
    <scope>NUCLEOTIDE SEQUENCE [LARGE SCALE GENOMIC DNA]</scope>
    <source>
        <strain>ATCC BAA-381 / DSM 21671 / CCUG 45161 / LMG 19568 / NCTC 13146 / CH001A</strain>
    </source>
</reference>